<dbReference type="EMBL" id="L23478">
    <property type="protein sequence ID" value="AAA16203.1"/>
    <property type="molecule type" value="Genomic_DNA"/>
</dbReference>
<dbReference type="SMR" id="P38037"/>
<dbReference type="GO" id="GO:0005829">
    <property type="term" value="C:cytosol"/>
    <property type="evidence" value="ECO:0007669"/>
    <property type="project" value="TreeGrafter"/>
</dbReference>
<dbReference type="GO" id="GO:0043022">
    <property type="term" value="F:ribosome binding"/>
    <property type="evidence" value="ECO:0007669"/>
    <property type="project" value="UniProtKB-UniRule"/>
</dbReference>
<dbReference type="GO" id="GO:0019843">
    <property type="term" value="F:rRNA binding"/>
    <property type="evidence" value="ECO:0007669"/>
    <property type="project" value="UniProtKB-UniRule"/>
</dbReference>
<dbReference type="GO" id="GO:0003743">
    <property type="term" value="F:translation initiation factor activity"/>
    <property type="evidence" value="ECO:0007669"/>
    <property type="project" value="UniProtKB-UniRule"/>
</dbReference>
<dbReference type="CDD" id="cd04451">
    <property type="entry name" value="S1_IF1"/>
    <property type="match status" value="1"/>
</dbReference>
<dbReference type="Gene3D" id="2.40.50.140">
    <property type="entry name" value="Nucleic acid-binding proteins"/>
    <property type="match status" value="1"/>
</dbReference>
<dbReference type="HAMAP" id="MF_00075">
    <property type="entry name" value="IF_1"/>
    <property type="match status" value="1"/>
</dbReference>
<dbReference type="InterPro" id="IPR012340">
    <property type="entry name" value="NA-bd_OB-fold"/>
</dbReference>
<dbReference type="InterPro" id="IPR006196">
    <property type="entry name" value="RNA-binding_domain_S1_IF1"/>
</dbReference>
<dbReference type="InterPro" id="IPR004368">
    <property type="entry name" value="TIF_IF1"/>
</dbReference>
<dbReference type="NCBIfam" id="TIGR00008">
    <property type="entry name" value="infA"/>
    <property type="match status" value="1"/>
</dbReference>
<dbReference type="PANTHER" id="PTHR33370">
    <property type="entry name" value="TRANSLATION INITIATION FACTOR IF-1, CHLOROPLASTIC"/>
    <property type="match status" value="1"/>
</dbReference>
<dbReference type="PANTHER" id="PTHR33370:SF1">
    <property type="entry name" value="TRANSLATION INITIATION FACTOR IF-1, CHLOROPLASTIC"/>
    <property type="match status" value="1"/>
</dbReference>
<dbReference type="Pfam" id="PF01176">
    <property type="entry name" value="eIF-1a"/>
    <property type="match status" value="1"/>
</dbReference>
<dbReference type="SUPFAM" id="SSF50249">
    <property type="entry name" value="Nucleic acid-binding proteins"/>
    <property type="match status" value="1"/>
</dbReference>
<dbReference type="PROSITE" id="PS50832">
    <property type="entry name" value="S1_IF1_TYPE"/>
    <property type="match status" value="1"/>
</dbReference>
<keyword id="KW-0963">Cytoplasm</keyword>
<keyword id="KW-0396">Initiation factor</keyword>
<keyword id="KW-0648">Protein biosynthesis</keyword>
<keyword id="KW-0694">RNA-binding</keyword>
<keyword id="KW-0699">rRNA-binding</keyword>
<name>IF1_MYCSP</name>
<proteinExistence type="inferred from homology"/>
<sequence>MEKLTYYQEITFNGKKQKRKKEEVIKMTGKVTKMHSTKNYDVLLENDQEIKAYISGKMSLHNIKLIPGDMVDVEISPFNLTLGRIVFRHK</sequence>
<protein>
    <recommendedName>
        <fullName evidence="1">Translation initiation factor IF-1</fullName>
    </recommendedName>
</protein>
<gene>
    <name evidence="1" type="primary">infA</name>
</gene>
<feature type="chain" id="PRO_0000095827" description="Translation initiation factor IF-1">
    <location>
        <begin position="1"/>
        <end position="90"/>
    </location>
</feature>
<feature type="domain" description="S1-like" evidence="1">
    <location>
        <begin position="15"/>
        <end position="90"/>
    </location>
</feature>
<evidence type="ECO:0000255" key="1">
    <source>
        <dbReference type="HAMAP-Rule" id="MF_00075"/>
    </source>
</evidence>
<evidence type="ECO:0000305" key="2">
    <source>
    </source>
</evidence>
<reference key="1">
    <citation type="journal article" date="1993" name="J. Bacteriol.">
        <title>Cloning and characterization of the RNA polymerase alpha-subunit operon of Chlamydia trachomatis.</title>
        <authorList>
            <person name="Tan M."/>
            <person name="Klein R."/>
            <person name="Grant R."/>
            <person name="Ganem D."/>
            <person name="Engel J.N."/>
        </authorList>
    </citation>
    <scope>NUCLEOTIDE SEQUENCE [GENOMIC DNA]</scope>
</reference>
<reference key="2">
    <citation type="journal article" date="1995" name="J. Bacteriol.">
        <authorList>
            <person name="Tan M."/>
            <person name="Klein R."/>
            <person name="Grant R."/>
            <person name="Ganem D."/>
            <person name="Engel J.N."/>
        </authorList>
    </citation>
    <scope>ERRATUM OF PUBMED:8226662</scope>
    <scope>CORRECTION OF SPECIES OF ORIGIN</scope>
</reference>
<comment type="function">
    <text evidence="1">One of the essential components for the initiation of protein synthesis. Stabilizes the binding of IF-2 and IF-3 on the 30S subunit to which N-formylmethionyl-tRNA(fMet) subsequently binds. Helps modulate mRNA selection, yielding the 30S pre-initiation complex (PIC). Upon addition of the 50S ribosomal subunit IF-1, IF-2 and IF-3 are released leaving the mature 70S translation initiation complex.</text>
</comment>
<comment type="subunit">
    <text evidence="1">Component of the 30S ribosomal translation pre-initiation complex which assembles on the 30S ribosome in the order IF-2 and IF-3, IF-1 and N-formylmethionyl-tRNA(fMet); mRNA recruitment can occur at any time during PIC assembly.</text>
</comment>
<comment type="subcellular location">
    <subcellularLocation>
        <location evidence="1">Cytoplasm</location>
    </subcellularLocation>
</comment>
<comment type="similarity">
    <text evidence="1">Belongs to the IF-1 family.</text>
</comment>
<comment type="caution">
    <text evidence="2">Was originally thought to originate from Chlamydia trachomatis.</text>
</comment>
<accession>P38037</accession>
<organism>
    <name type="scientific">Mycoplasma sp</name>
    <dbReference type="NCBI Taxonomy" id="2108"/>
    <lineage>
        <taxon>Bacteria</taxon>
        <taxon>Bacillati</taxon>
        <taxon>Mycoplasmatota</taxon>
        <taxon>Mollicutes</taxon>
        <taxon>Mycoplasmataceae</taxon>
        <taxon>Mycoplasma</taxon>
    </lineage>
</organism>